<organism>
    <name type="scientific">Rattus norvegicus</name>
    <name type="common">Rat</name>
    <dbReference type="NCBI Taxonomy" id="10116"/>
    <lineage>
        <taxon>Eukaryota</taxon>
        <taxon>Metazoa</taxon>
        <taxon>Chordata</taxon>
        <taxon>Craniata</taxon>
        <taxon>Vertebrata</taxon>
        <taxon>Euteleostomi</taxon>
        <taxon>Mammalia</taxon>
        <taxon>Eutheria</taxon>
        <taxon>Euarchontoglires</taxon>
        <taxon>Glires</taxon>
        <taxon>Rodentia</taxon>
        <taxon>Myomorpha</taxon>
        <taxon>Muroidea</taxon>
        <taxon>Muridae</taxon>
        <taxon>Murinae</taxon>
        <taxon>Rattus</taxon>
    </lineage>
</organism>
<proteinExistence type="evidence at protein level"/>
<sequence>MERLGEKASRLLEKLRLSDSGSAKFGRRKGEASRSGSDGTPGAGKGRLSGLGGPRKSGHRGANGGPGDEALEPAREQGPLDAERNARGSFEAQRFEGSFPGGPPPTRALPLPLSSPPDFRLETTAPALSPRSSFASSSASDASKPSSPRGSLLLDGAGASGAGGSRPCSNRTSGISMGYDQRHGSPLPAGPCLFGLPLTTAPSGYSSGGVPSAYPELHAALDRLCAHRPVGFGCQESRHSYPPALGSPGALTGAVVGTAGPLERRGTQPGRHSVTGYGDCAAGARYQDELTALLRLTVATGGREAGARGEPLGIEPSGLEESPGSFVPEASRSRIREPEAREDYFGTCIKCNKGIYGQSNACQALDSLYHTQCFVCCSCGRTLRCKAFYSVNGSVYCEEDYLFSGFQEAAEKCCVCGHLILEKILQAMGKSYHPGCFRCIVCNKCLDGVPFTVDFSNQVYCVTDYHKNYAPKCAACGQPILPSEGCEDIVRVISMDRDYHFECYHCEDCRMQLSDEEGCCCFPLDGHLLCHGCHMQRLSARQPPTNYI</sequence>
<name>AJUBA_RAT</name>
<keyword id="KW-0130">Cell adhesion</keyword>
<keyword id="KW-0131">Cell cycle</keyword>
<keyword id="KW-0965">Cell junction</keyword>
<keyword id="KW-1003">Cell membrane</keyword>
<keyword id="KW-0963">Cytoplasm</keyword>
<keyword id="KW-0206">Cytoskeleton</keyword>
<keyword id="KW-0440">LIM domain</keyword>
<keyword id="KW-0472">Membrane</keyword>
<keyword id="KW-0479">Metal-binding</keyword>
<keyword id="KW-0539">Nucleus</keyword>
<keyword id="KW-0597">Phosphoprotein</keyword>
<keyword id="KW-1185">Reference proteome</keyword>
<keyword id="KW-0677">Repeat</keyword>
<keyword id="KW-0678">Repressor</keyword>
<keyword id="KW-0943">RNA-mediated gene silencing</keyword>
<keyword id="KW-0804">Transcription</keyword>
<keyword id="KW-0805">Transcription regulation</keyword>
<keyword id="KW-0862">Zinc</keyword>
<protein>
    <recommendedName>
        <fullName>LIM domain-containing protein ajuba</fullName>
    </recommendedName>
</protein>
<comment type="function">
    <text evidence="1">Adapter or scaffold protein which participates in the assembly of numerous protein complexes and is involved in several cellular processes such as cell fate determination, cytoskeletal organization, repression of gene transcription, mitosis, cell-cell adhesion, cell differentiation, proliferation and migration. Contributes to the linking and/or strengthening of epithelia cell-cell junctions in part by linking adhesive receptors to the actin cytoskeleton. May be involved in signal transduction from cell adhesion sites to the nucleus. Plays an important role in regulation of the kinase activity of AURKA for mitotic commitment. Also a component of the IL-1 signaling pathway modulating IL-1-induced NFKB1 activation by influencing the assembly and activity of the PRKCZ-SQSTM1-TRAF6 multiprotein signaling complex. Functions as an HDAC-dependent corepressor for a subset of GFI1 target genes. Acts as a transcriptional corepressor for SNAI1 and SNAI2/SLUG-dependent repression of E-cadherin transcription. Acts as a hypoxic regulator by bridging an association between the prolyl hydroxylases and VHL enabling efficient degradation of HIF1A. Positively regulates microRNA (miRNA)-mediated gene silencing. Negatively regulates the Hippo signaling pathway and antagonizes phosphorylation of YAP1 (By similarity).</text>
</comment>
<comment type="subunit">
    <text evidence="1">Interacts with GRB2 and PIP5K1B. Interacts with AURKA; the interaction occurs during mitosis and both proteins are phosphorylated as they form a complex. Interacts with CTNNA1 and with F-actin. Interacts with LATS2; the interaction occurs during mitosis and the complex regulates organization of the spindle apparatus through recruitment of TUBG to the centrosome. Forms a complex with SQSTM1, PRKCZ and TRAF6. Component of the GFI1-AJUBA-HDAC1 repressor complex. Interacts directly (via the LIM domains) with GFI1; the interaction results in the HDAC-dependent corepression of a subset of GFI1 target genes, and is independent of the GFI1 SNAG domain. Interacts with HDAC1, HDAC2 and HDAC3 (By similarity). Interacts with SLC1A2. Interacts with EIF4E, AGO1, AGO2, DCP2, DDX6, LATS1, LATS2, SAV1, EGLN2/PHD1 and EGLN3/PHD3. Interacts (via LIM domains) with VHL (By similarity). Interacts (via LIM domains) with SNAI1 (via SNAG domain), SNAI2/SLUG (via SNAG domain) and SCRT1 (via SNAG domain) (By similarity).</text>
</comment>
<comment type="subcellular location">
    <subcellularLocation>
        <location evidence="6">Cytoplasm</location>
        <location evidence="6">Cytoskeleton</location>
    </subcellularLocation>
    <subcellularLocation>
        <location evidence="6">Cell membrane</location>
    </subcellularLocation>
    <subcellularLocation>
        <location evidence="1">Cell junction</location>
    </subcellularLocation>
    <subcellularLocation>
        <location evidence="1">Nucleus</location>
    </subcellularLocation>
    <subcellularLocation>
        <location evidence="1">Cytoplasm</location>
        <location evidence="1">Cytoskeleton</location>
        <location evidence="1">Microtubule organizing center</location>
        <location evidence="1">Centrosome</location>
    </subcellularLocation>
    <subcellularLocation>
        <location evidence="1">Cytoplasm</location>
        <location evidence="1">P-body</location>
    </subcellularLocation>
    <text evidence="1">Shuttles between the cytoplasm and the nucleus (By similarity). Localizes on centrosomes during G2-M phase (By similarity). Colocalizes with GFI1 in the nucleus (By similarity). Preferentially colocalizes with cadherin-adhesive complexes at sites of cell-cell contacts.</text>
</comment>
<comment type="tissue specificity">
    <text evidence="6">Expressed in the brain, testis, kidney, heart, lung and liver.</text>
</comment>
<comment type="domain">
    <text evidence="1">LIM region interacts with CTNNA1. The preLIM region binds directly actin filaments (By similarity).</text>
</comment>
<comment type="domain">
    <text evidence="1">LIM-2 and LIM-3 domains mediate the interaction with the N-terminal region of AURKA. The association between LATS2 and AJUBA required the second LIM domain of AJUBA (By similarity).</text>
</comment>
<comment type="PTM">
    <text evidence="1">Phosphorylated by LATS2 during mitosis. Phosphorylated by AURKA (By similarity).</text>
</comment>
<comment type="miscellaneous">
    <text>'Ajuba' means 'curiosity' in Urdu, an Indian dialect.</text>
</comment>
<comment type="similarity">
    <text evidence="7">Belongs to the zyxin/ajuba family.</text>
</comment>
<accession>Q5U2Z2</accession>
<accession>Q99ND4</accession>
<evidence type="ECO:0000250" key="1"/>
<evidence type="ECO:0000250" key="2">
    <source>
        <dbReference type="UniProtKB" id="Q96IF1"/>
    </source>
</evidence>
<evidence type="ECO:0000255" key="3"/>
<evidence type="ECO:0000255" key="4">
    <source>
        <dbReference type="PROSITE-ProRule" id="PRU00125"/>
    </source>
</evidence>
<evidence type="ECO:0000256" key="5">
    <source>
        <dbReference type="SAM" id="MobiDB-lite"/>
    </source>
</evidence>
<evidence type="ECO:0000269" key="6">
    <source>
    </source>
</evidence>
<evidence type="ECO:0000305" key="7"/>
<reference key="1">
    <citation type="submission" date="2004-11" db="EMBL/GenBank/DDBJ databases">
        <authorList>
            <consortium name="NIH - Mammalian Gene Collection (MGC) project"/>
        </authorList>
    </citation>
    <scope>NUCLEOTIDE SEQUENCE [LARGE SCALE MRNA]</scope>
    <source>
        <tissue>Kidney</tissue>
    </source>
</reference>
<reference key="2">
    <citation type="journal article" date="2002" name="Mol. Cell. Neurosci.">
        <title>The amino terminus of the glial glutamate transporter GLT-1 interacts with the LIM protein Ajuba.</title>
        <authorList>
            <person name="Marie H."/>
            <person name="Billups D."/>
            <person name="Bedford F.K."/>
            <person name="Dumoulin A."/>
            <person name="Goyal R.K."/>
            <person name="Longmore G.D."/>
            <person name="Moss S.J."/>
            <person name="Attwell D."/>
        </authorList>
    </citation>
    <scope>NUCLEOTIDE SEQUENCE [MRNA] OF 177-548</scope>
    <scope>SUBCELLULAR LOCATION</scope>
    <scope>TISSUE SPECIFICITY</scope>
    <scope>INTERACTION WITH SLC1A2</scope>
</reference>
<dbReference type="EMBL" id="BC085802">
    <property type="protein sequence ID" value="AAH85802.1"/>
    <property type="molecule type" value="mRNA"/>
</dbReference>
<dbReference type="EMBL" id="AJ306292">
    <property type="protein sequence ID" value="CAC28536.1"/>
    <property type="molecule type" value="mRNA"/>
</dbReference>
<dbReference type="RefSeq" id="NP_445955.1">
    <property type="nucleotide sequence ID" value="NM_053503.1"/>
</dbReference>
<dbReference type="FunCoup" id="Q5U2Z2">
    <property type="interactions" value="405"/>
</dbReference>
<dbReference type="STRING" id="10116.ENSRNOP00000017753"/>
<dbReference type="GlyGen" id="Q5U2Z2">
    <property type="glycosylation" value="1 site"/>
</dbReference>
<dbReference type="iPTMnet" id="Q5U2Z2"/>
<dbReference type="PhosphoSitePlus" id="Q5U2Z2"/>
<dbReference type="PaxDb" id="10116-ENSRNOP00000017753"/>
<dbReference type="Ensembl" id="ENSRNOT00000017753.6">
    <property type="protein sequence ID" value="ENSRNOP00000017753.3"/>
    <property type="gene ID" value="ENSRNOG00000012791.7"/>
</dbReference>
<dbReference type="GeneID" id="85265"/>
<dbReference type="KEGG" id="rno:85265"/>
<dbReference type="UCSC" id="RGD:620407">
    <property type="organism name" value="rat"/>
</dbReference>
<dbReference type="AGR" id="RGD:620407"/>
<dbReference type="CTD" id="84962"/>
<dbReference type="RGD" id="620407">
    <property type="gene designation" value="Ajuba"/>
</dbReference>
<dbReference type="eggNOG" id="KOG1701">
    <property type="taxonomic scope" value="Eukaryota"/>
</dbReference>
<dbReference type="GeneTree" id="ENSGT00940000160978"/>
<dbReference type="HOGENOM" id="CLU_001357_11_2_1"/>
<dbReference type="InParanoid" id="Q5U2Z2"/>
<dbReference type="OMA" id="HQGTANY"/>
<dbReference type="OrthoDB" id="25414at2759"/>
<dbReference type="PhylomeDB" id="Q5U2Z2"/>
<dbReference type="TreeFam" id="TF320310"/>
<dbReference type="Reactome" id="R-RNO-1234176">
    <property type="pathway name" value="Oxygen-dependent proline hydroxylation of Hypoxia-inducible Factor Alpha"/>
</dbReference>
<dbReference type="Reactome" id="R-RNO-2565942">
    <property type="pathway name" value="Regulation of PLK1 Activity at G2/M Transition"/>
</dbReference>
<dbReference type="Reactome" id="R-RNO-9841922">
    <property type="pathway name" value="MLL4 and MLL3 complexes regulate expression of PPARG target genes in adipogenesis and hepatic steatosis"/>
</dbReference>
<dbReference type="PRO" id="PR:Q5U2Z2"/>
<dbReference type="Proteomes" id="UP000002494">
    <property type="component" value="Chromosome 15"/>
</dbReference>
<dbReference type="Bgee" id="ENSRNOG00000012791">
    <property type="expression patterns" value="Expressed in lung and 19 other cell types or tissues"/>
</dbReference>
<dbReference type="GO" id="GO:0005912">
    <property type="term" value="C:adherens junction"/>
    <property type="evidence" value="ECO:0000318"/>
    <property type="project" value="GO_Central"/>
</dbReference>
<dbReference type="GO" id="GO:0005911">
    <property type="term" value="C:cell-cell junction"/>
    <property type="evidence" value="ECO:0000314"/>
    <property type="project" value="MGI"/>
</dbReference>
<dbReference type="GO" id="GO:0005813">
    <property type="term" value="C:centrosome"/>
    <property type="evidence" value="ECO:0007669"/>
    <property type="project" value="UniProtKB-SubCell"/>
</dbReference>
<dbReference type="GO" id="GO:0005829">
    <property type="term" value="C:cytosol"/>
    <property type="evidence" value="ECO:0000266"/>
    <property type="project" value="RGD"/>
</dbReference>
<dbReference type="GO" id="GO:0005925">
    <property type="term" value="C:focal adhesion"/>
    <property type="evidence" value="ECO:0000266"/>
    <property type="project" value="RGD"/>
</dbReference>
<dbReference type="GO" id="GO:0005794">
    <property type="term" value="C:Golgi apparatus"/>
    <property type="evidence" value="ECO:0007669"/>
    <property type="project" value="Ensembl"/>
</dbReference>
<dbReference type="GO" id="GO:0030027">
    <property type="term" value="C:lamellipodium"/>
    <property type="evidence" value="ECO:0000266"/>
    <property type="project" value="RGD"/>
</dbReference>
<dbReference type="GO" id="GO:0005654">
    <property type="term" value="C:nucleoplasm"/>
    <property type="evidence" value="ECO:0007669"/>
    <property type="project" value="Ensembl"/>
</dbReference>
<dbReference type="GO" id="GO:0005634">
    <property type="term" value="C:nucleus"/>
    <property type="evidence" value="ECO:0000266"/>
    <property type="project" value="RGD"/>
</dbReference>
<dbReference type="GO" id="GO:0000932">
    <property type="term" value="C:P-body"/>
    <property type="evidence" value="ECO:0000266"/>
    <property type="project" value="RGD"/>
</dbReference>
<dbReference type="GO" id="GO:0005886">
    <property type="term" value="C:plasma membrane"/>
    <property type="evidence" value="ECO:0007669"/>
    <property type="project" value="UniProtKB-SubCell"/>
</dbReference>
<dbReference type="GO" id="GO:0005667">
    <property type="term" value="C:transcription regulator complex"/>
    <property type="evidence" value="ECO:0000266"/>
    <property type="project" value="RGD"/>
</dbReference>
<dbReference type="GO" id="GO:0051015">
    <property type="term" value="F:actin filament binding"/>
    <property type="evidence" value="ECO:0000266"/>
    <property type="project" value="RGD"/>
</dbReference>
<dbReference type="GO" id="GO:0045294">
    <property type="term" value="F:alpha-catenin binding"/>
    <property type="evidence" value="ECO:0000266"/>
    <property type="project" value="RGD"/>
</dbReference>
<dbReference type="GO" id="GO:0003682">
    <property type="term" value="F:chromatin binding"/>
    <property type="evidence" value="ECO:0000266"/>
    <property type="project" value="RGD"/>
</dbReference>
<dbReference type="GO" id="GO:0046872">
    <property type="term" value="F:metal ion binding"/>
    <property type="evidence" value="ECO:0007669"/>
    <property type="project" value="UniProtKB-KW"/>
</dbReference>
<dbReference type="GO" id="GO:0030295">
    <property type="term" value="F:protein kinase activator activity"/>
    <property type="evidence" value="ECO:0000266"/>
    <property type="project" value="RGD"/>
</dbReference>
<dbReference type="GO" id="GO:0003714">
    <property type="term" value="F:transcription corepressor activity"/>
    <property type="evidence" value="ECO:0000250"/>
    <property type="project" value="UniProtKB"/>
</dbReference>
<dbReference type="GO" id="GO:0016339">
    <property type="term" value="P:calcium-dependent cell-cell adhesion via plasma membrane cell adhesion molecules"/>
    <property type="evidence" value="ECO:0000266"/>
    <property type="project" value="RGD"/>
</dbReference>
<dbReference type="GO" id="GO:0007010">
    <property type="term" value="P:cytoskeleton organization"/>
    <property type="evidence" value="ECO:0000318"/>
    <property type="project" value="GO_Central"/>
</dbReference>
<dbReference type="GO" id="GO:0048041">
    <property type="term" value="P:focal adhesion assembly"/>
    <property type="evidence" value="ECO:0000266"/>
    <property type="project" value="RGD"/>
</dbReference>
<dbReference type="GO" id="GO:0046474">
    <property type="term" value="P:glycerophospholipid biosynthetic process"/>
    <property type="evidence" value="ECO:0000266"/>
    <property type="project" value="RGD"/>
</dbReference>
<dbReference type="GO" id="GO:0030032">
    <property type="term" value="P:lamellipodium assembly"/>
    <property type="evidence" value="ECO:0000266"/>
    <property type="project" value="RGD"/>
</dbReference>
<dbReference type="GO" id="GO:0035278">
    <property type="term" value="P:miRNA-mediated gene silencing by inhibition of translation"/>
    <property type="evidence" value="ECO:0000250"/>
    <property type="project" value="UniProtKB"/>
</dbReference>
<dbReference type="GO" id="GO:0035195">
    <property type="term" value="P:miRNA-mediated post-transcriptional gene silencing"/>
    <property type="evidence" value="ECO:0000266"/>
    <property type="project" value="RGD"/>
</dbReference>
<dbReference type="GO" id="GO:0035331">
    <property type="term" value="P:negative regulation of hippo signaling"/>
    <property type="evidence" value="ECO:0000250"/>
    <property type="project" value="UniProtKB"/>
</dbReference>
<dbReference type="GO" id="GO:0000122">
    <property type="term" value="P:negative regulation of transcription by RNA polymerase II"/>
    <property type="evidence" value="ECO:0000266"/>
    <property type="project" value="RGD"/>
</dbReference>
<dbReference type="GO" id="GO:0009891">
    <property type="term" value="P:positive regulation of biosynthetic process"/>
    <property type="evidence" value="ECO:0000266"/>
    <property type="project" value="RGD"/>
</dbReference>
<dbReference type="GO" id="GO:0043123">
    <property type="term" value="P:positive regulation of canonical NF-kappaB signal transduction"/>
    <property type="evidence" value="ECO:0000266"/>
    <property type="project" value="RGD"/>
</dbReference>
<dbReference type="GO" id="GO:0031334">
    <property type="term" value="P:positive regulation of protein-containing complex assembly"/>
    <property type="evidence" value="ECO:0000266"/>
    <property type="project" value="RGD"/>
</dbReference>
<dbReference type="GO" id="GO:0008104">
    <property type="term" value="P:protein localization"/>
    <property type="evidence" value="ECO:0000266"/>
    <property type="project" value="RGD"/>
</dbReference>
<dbReference type="GO" id="GO:0030334">
    <property type="term" value="P:regulation of cell migration"/>
    <property type="evidence" value="ECO:0000266"/>
    <property type="project" value="RGD"/>
</dbReference>
<dbReference type="GO" id="GO:1900037">
    <property type="term" value="P:regulation of cellular response to hypoxia"/>
    <property type="evidence" value="ECO:0000266"/>
    <property type="project" value="RGD"/>
</dbReference>
<dbReference type="GO" id="GO:0006355">
    <property type="term" value="P:regulation of DNA-templated transcription"/>
    <property type="evidence" value="ECO:0000318"/>
    <property type="project" value="GO_Central"/>
</dbReference>
<dbReference type="GO" id="GO:0001666">
    <property type="term" value="P:response to hypoxia"/>
    <property type="evidence" value="ECO:0000266"/>
    <property type="project" value="RGD"/>
</dbReference>
<dbReference type="GO" id="GO:0035313">
    <property type="term" value="P:wound healing, spreading of epidermal cells"/>
    <property type="evidence" value="ECO:0000266"/>
    <property type="project" value="RGD"/>
</dbReference>
<dbReference type="CDD" id="cd09352">
    <property type="entry name" value="LIM1_Ajuba_like"/>
    <property type="match status" value="1"/>
</dbReference>
<dbReference type="CDD" id="cd09355">
    <property type="entry name" value="LIM2_Ajuba_like"/>
    <property type="match status" value="1"/>
</dbReference>
<dbReference type="CDD" id="cd09438">
    <property type="entry name" value="LIM3_Ajuba_like"/>
    <property type="match status" value="1"/>
</dbReference>
<dbReference type="FunFam" id="2.10.110.10:FF:000028">
    <property type="entry name" value="LIM domain-containing protein 1"/>
    <property type="match status" value="1"/>
</dbReference>
<dbReference type="FunFam" id="2.10.110.10:FF:000037">
    <property type="entry name" value="LIM domain-containing protein 1"/>
    <property type="match status" value="1"/>
</dbReference>
<dbReference type="Gene3D" id="2.10.110.10">
    <property type="entry name" value="Cysteine Rich Protein"/>
    <property type="match status" value="3"/>
</dbReference>
<dbReference type="InterPro" id="IPR047172">
    <property type="entry name" value="Ajuba-like"/>
</dbReference>
<dbReference type="InterPro" id="IPR047245">
    <property type="entry name" value="Ajuba-like_LIM1"/>
</dbReference>
<dbReference type="InterPro" id="IPR047247">
    <property type="entry name" value="Ajuba-like_LIM2"/>
</dbReference>
<dbReference type="InterPro" id="IPR047248">
    <property type="entry name" value="Ajuba-like_LIM3"/>
</dbReference>
<dbReference type="InterPro" id="IPR001781">
    <property type="entry name" value="Znf_LIM"/>
</dbReference>
<dbReference type="PANTHER" id="PTHR24219:SF7">
    <property type="entry name" value="LIM DOMAIN-CONTAINING PROTEIN AJUBA"/>
    <property type="match status" value="1"/>
</dbReference>
<dbReference type="PANTHER" id="PTHR24219">
    <property type="entry name" value="LIM DOMAIN-CONTAINING PROTEIN JUB"/>
    <property type="match status" value="1"/>
</dbReference>
<dbReference type="Pfam" id="PF00412">
    <property type="entry name" value="LIM"/>
    <property type="match status" value="3"/>
</dbReference>
<dbReference type="SMART" id="SM00132">
    <property type="entry name" value="LIM"/>
    <property type="match status" value="3"/>
</dbReference>
<dbReference type="SUPFAM" id="SSF57716">
    <property type="entry name" value="Glucocorticoid receptor-like (DNA-binding domain)"/>
    <property type="match status" value="3"/>
</dbReference>
<dbReference type="PROSITE" id="PS00478">
    <property type="entry name" value="LIM_DOMAIN_1"/>
    <property type="match status" value="2"/>
</dbReference>
<dbReference type="PROSITE" id="PS50023">
    <property type="entry name" value="LIM_DOMAIN_2"/>
    <property type="match status" value="3"/>
</dbReference>
<feature type="chain" id="PRO_0000312627" description="LIM domain-containing protein ajuba">
    <location>
        <begin position="1"/>
        <end position="548"/>
    </location>
</feature>
<feature type="domain" description="LIM zinc-binding 1" evidence="4">
    <location>
        <begin position="346"/>
        <end position="407"/>
    </location>
</feature>
<feature type="domain" description="LIM zinc-binding 2" evidence="4">
    <location>
        <begin position="411"/>
        <end position="471"/>
    </location>
</feature>
<feature type="domain" description="LIM zinc-binding 3" evidence="4">
    <location>
        <begin position="472"/>
        <end position="540"/>
    </location>
</feature>
<feature type="region of interest" description="PreLIM">
    <location>
        <begin position="1"/>
        <end position="345"/>
    </location>
</feature>
<feature type="region of interest" description="Disordered" evidence="5">
    <location>
        <begin position="1"/>
        <end position="182"/>
    </location>
</feature>
<feature type="region of interest" description="Disordered" evidence="5">
    <location>
        <begin position="307"/>
        <end position="333"/>
    </location>
</feature>
<feature type="short sequence motif" description="Nuclear localization signal" evidence="3">
    <location>
        <begin position="290"/>
        <end position="298"/>
    </location>
</feature>
<feature type="compositionally biased region" description="Basic and acidic residues" evidence="5">
    <location>
        <begin position="1"/>
        <end position="17"/>
    </location>
</feature>
<feature type="compositionally biased region" description="Gly residues" evidence="5">
    <location>
        <begin position="39"/>
        <end position="67"/>
    </location>
</feature>
<feature type="compositionally biased region" description="Low complexity" evidence="5">
    <location>
        <begin position="125"/>
        <end position="157"/>
    </location>
</feature>
<feature type="modified residue" description="Phosphoserine" evidence="2">
    <location>
        <position position="89"/>
    </location>
</feature>
<feature type="modified residue" description="Phosphoserine" evidence="2">
    <location>
        <position position="129"/>
    </location>
</feature>
<feature type="modified residue" description="Phosphoserine" evidence="2">
    <location>
        <position position="143"/>
    </location>
</feature>
<feature type="modified residue" description="Phosphoserine" evidence="2">
    <location>
        <position position="185"/>
    </location>
</feature>
<feature type="modified residue" description="Phosphoserine" evidence="2">
    <location>
        <position position="273"/>
    </location>
</feature>
<feature type="sequence conflict" description="In Ref. 2; CAC28536." evidence="7" ref="2">
    <original>DY</original>
    <variation>GD</variation>
    <location>
        <begin position="343"/>
        <end position="344"/>
    </location>
</feature>
<gene>
    <name type="primary">Ajuba</name>
    <name type="synonym">Jub</name>
</gene>